<sequence>MSFIAIIPARYASTRLPGKPLADIAGKPMVVHVMERALASGADRVIVATDHPDVVKAVEAAGGEVCLTRADHQSGTERLAEVIEHYGFADDDIIVNVQGDEPLVPPVIIRQVADNLAACSAGMATLAVPIASSEEAFNPNAVKVVMDAQGYALYFSRATIPWERERFAQSKETIGDCFLRHIGIYAYRAGFIRRYVNWAPSQLEQIELLEQLRVLWYGEKIHVAVAKAVPAVGVDTQSDLDRVRAIMLNQ</sequence>
<organism>
    <name type="scientific">Yersinia pseudotuberculosis serotype O:3 (strain YPIII)</name>
    <dbReference type="NCBI Taxonomy" id="502800"/>
    <lineage>
        <taxon>Bacteria</taxon>
        <taxon>Pseudomonadati</taxon>
        <taxon>Pseudomonadota</taxon>
        <taxon>Gammaproteobacteria</taxon>
        <taxon>Enterobacterales</taxon>
        <taxon>Yersiniaceae</taxon>
        <taxon>Yersinia</taxon>
    </lineage>
</organism>
<keyword id="KW-0963">Cytoplasm</keyword>
<keyword id="KW-0448">Lipopolysaccharide biosynthesis</keyword>
<keyword id="KW-0548">Nucleotidyltransferase</keyword>
<keyword id="KW-0808">Transferase</keyword>
<proteinExistence type="inferred from homology"/>
<feature type="chain" id="PRO_1000091917" description="3-deoxy-manno-octulosonate cytidylyltransferase">
    <location>
        <begin position="1"/>
        <end position="250"/>
    </location>
</feature>
<name>KDSB_YERPY</name>
<gene>
    <name evidence="1" type="primary">kdsB</name>
    <name type="ordered locus">YPK_2660</name>
</gene>
<evidence type="ECO:0000255" key="1">
    <source>
        <dbReference type="HAMAP-Rule" id="MF_00057"/>
    </source>
</evidence>
<comment type="function">
    <text evidence="1">Activates KDO (a required 8-carbon sugar) for incorporation into bacterial lipopolysaccharide in Gram-negative bacteria.</text>
</comment>
<comment type="catalytic activity">
    <reaction evidence="1">
        <text>3-deoxy-alpha-D-manno-oct-2-ulosonate + CTP = CMP-3-deoxy-beta-D-manno-octulosonate + diphosphate</text>
        <dbReference type="Rhea" id="RHEA:23448"/>
        <dbReference type="ChEBI" id="CHEBI:33019"/>
        <dbReference type="ChEBI" id="CHEBI:37563"/>
        <dbReference type="ChEBI" id="CHEBI:85986"/>
        <dbReference type="ChEBI" id="CHEBI:85987"/>
        <dbReference type="EC" id="2.7.7.38"/>
    </reaction>
</comment>
<comment type="pathway">
    <text evidence="1">Nucleotide-sugar biosynthesis; CMP-3-deoxy-D-manno-octulosonate biosynthesis; CMP-3-deoxy-D-manno-octulosonate from 3-deoxy-D-manno-octulosonate and CTP: step 1/1.</text>
</comment>
<comment type="pathway">
    <text evidence="1">Bacterial outer membrane biogenesis; lipopolysaccharide biosynthesis.</text>
</comment>
<comment type="subcellular location">
    <subcellularLocation>
        <location evidence="1">Cytoplasm</location>
    </subcellularLocation>
</comment>
<comment type="similarity">
    <text evidence="1">Belongs to the KdsB family.</text>
</comment>
<protein>
    <recommendedName>
        <fullName evidence="1">3-deoxy-manno-octulosonate cytidylyltransferase</fullName>
        <ecNumber evidence="1">2.7.7.38</ecNumber>
    </recommendedName>
    <alternativeName>
        <fullName evidence="1">CMP-2-keto-3-deoxyoctulosonic acid synthase</fullName>
        <shortName evidence="1">CKS</shortName>
        <shortName evidence="1">CMP-KDO synthase</shortName>
    </alternativeName>
</protein>
<accession>B1JQT6</accession>
<dbReference type="EC" id="2.7.7.38" evidence="1"/>
<dbReference type="EMBL" id="CP000950">
    <property type="protein sequence ID" value="ACA68937.1"/>
    <property type="molecule type" value="Genomic_DNA"/>
</dbReference>
<dbReference type="RefSeq" id="WP_002211314.1">
    <property type="nucleotide sequence ID" value="NZ_CP009792.1"/>
</dbReference>
<dbReference type="SMR" id="B1JQT6"/>
<dbReference type="GeneID" id="57977196"/>
<dbReference type="KEGG" id="ypy:YPK_2660"/>
<dbReference type="PATRIC" id="fig|502800.11.peg.3359"/>
<dbReference type="UniPathway" id="UPA00030"/>
<dbReference type="UniPathway" id="UPA00358">
    <property type="reaction ID" value="UER00476"/>
</dbReference>
<dbReference type="GO" id="GO:0005829">
    <property type="term" value="C:cytosol"/>
    <property type="evidence" value="ECO:0007669"/>
    <property type="project" value="TreeGrafter"/>
</dbReference>
<dbReference type="GO" id="GO:0008690">
    <property type="term" value="F:3-deoxy-manno-octulosonate cytidylyltransferase activity"/>
    <property type="evidence" value="ECO:0007669"/>
    <property type="project" value="UniProtKB-UniRule"/>
</dbReference>
<dbReference type="GO" id="GO:0033468">
    <property type="term" value="P:CMP-keto-3-deoxy-D-manno-octulosonic acid biosynthetic process"/>
    <property type="evidence" value="ECO:0007669"/>
    <property type="project" value="UniProtKB-UniRule"/>
</dbReference>
<dbReference type="GO" id="GO:0009103">
    <property type="term" value="P:lipopolysaccharide biosynthetic process"/>
    <property type="evidence" value="ECO:0007669"/>
    <property type="project" value="UniProtKB-UniRule"/>
</dbReference>
<dbReference type="CDD" id="cd02517">
    <property type="entry name" value="CMP-KDO-Synthetase"/>
    <property type="match status" value="1"/>
</dbReference>
<dbReference type="FunFam" id="3.90.550.10:FF:000011">
    <property type="entry name" value="3-deoxy-manno-octulosonate cytidylyltransferase"/>
    <property type="match status" value="1"/>
</dbReference>
<dbReference type="Gene3D" id="3.90.550.10">
    <property type="entry name" value="Spore Coat Polysaccharide Biosynthesis Protein SpsA, Chain A"/>
    <property type="match status" value="1"/>
</dbReference>
<dbReference type="HAMAP" id="MF_00057">
    <property type="entry name" value="KdsB"/>
    <property type="match status" value="1"/>
</dbReference>
<dbReference type="InterPro" id="IPR003329">
    <property type="entry name" value="Cytidylyl_trans"/>
</dbReference>
<dbReference type="InterPro" id="IPR004528">
    <property type="entry name" value="KdsB"/>
</dbReference>
<dbReference type="InterPro" id="IPR029044">
    <property type="entry name" value="Nucleotide-diphossugar_trans"/>
</dbReference>
<dbReference type="NCBIfam" id="TIGR00466">
    <property type="entry name" value="kdsB"/>
    <property type="match status" value="1"/>
</dbReference>
<dbReference type="NCBIfam" id="NF003950">
    <property type="entry name" value="PRK05450.1-3"/>
    <property type="match status" value="1"/>
</dbReference>
<dbReference type="NCBIfam" id="NF003952">
    <property type="entry name" value="PRK05450.1-5"/>
    <property type="match status" value="1"/>
</dbReference>
<dbReference type="NCBIfam" id="NF009905">
    <property type="entry name" value="PRK13368.1"/>
    <property type="match status" value="1"/>
</dbReference>
<dbReference type="PANTHER" id="PTHR42866">
    <property type="entry name" value="3-DEOXY-MANNO-OCTULOSONATE CYTIDYLYLTRANSFERASE"/>
    <property type="match status" value="1"/>
</dbReference>
<dbReference type="PANTHER" id="PTHR42866:SF2">
    <property type="entry name" value="3-DEOXY-MANNO-OCTULOSONATE CYTIDYLYLTRANSFERASE, MITOCHONDRIAL"/>
    <property type="match status" value="1"/>
</dbReference>
<dbReference type="Pfam" id="PF02348">
    <property type="entry name" value="CTP_transf_3"/>
    <property type="match status" value="1"/>
</dbReference>
<dbReference type="SUPFAM" id="SSF53448">
    <property type="entry name" value="Nucleotide-diphospho-sugar transferases"/>
    <property type="match status" value="1"/>
</dbReference>
<reference key="1">
    <citation type="submission" date="2008-02" db="EMBL/GenBank/DDBJ databases">
        <title>Complete sequence of Yersinia pseudotuberculosis YPIII.</title>
        <authorList>
            <consortium name="US DOE Joint Genome Institute"/>
            <person name="Copeland A."/>
            <person name="Lucas S."/>
            <person name="Lapidus A."/>
            <person name="Glavina del Rio T."/>
            <person name="Dalin E."/>
            <person name="Tice H."/>
            <person name="Bruce D."/>
            <person name="Goodwin L."/>
            <person name="Pitluck S."/>
            <person name="Munk A.C."/>
            <person name="Brettin T."/>
            <person name="Detter J.C."/>
            <person name="Han C."/>
            <person name="Tapia R."/>
            <person name="Schmutz J."/>
            <person name="Larimer F."/>
            <person name="Land M."/>
            <person name="Hauser L."/>
            <person name="Challacombe J.F."/>
            <person name="Green L."/>
            <person name="Lindler L.E."/>
            <person name="Nikolich M.P."/>
            <person name="Richardson P."/>
        </authorList>
    </citation>
    <scope>NUCLEOTIDE SEQUENCE [LARGE SCALE GENOMIC DNA]</scope>
    <source>
        <strain>YPIII</strain>
    </source>
</reference>